<proteinExistence type="inferred from homology"/>
<name>CBID_CLOD6</name>
<dbReference type="EC" id="2.1.1.195" evidence="1"/>
<dbReference type="EMBL" id="AM180355">
    <property type="protein sequence ID" value="CAJ70332.1"/>
    <property type="molecule type" value="Genomic_DNA"/>
</dbReference>
<dbReference type="RefSeq" id="WP_011861964.1">
    <property type="nucleotide sequence ID" value="NZ_JAUPES010000009.1"/>
</dbReference>
<dbReference type="RefSeq" id="YP_001089949.1">
    <property type="nucleotide sequence ID" value="NC_009089.1"/>
</dbReference>
<dbReference type="SMR" id="Q180S8"/>
<dbReference type="STRING" id="272563.CD630_34290"/>
<dbReference type="EnsemblBacteria" id="CAJ70332">
    <property type="protein sequence ID" value="CAJ70332"/>
    <property type="gene ID" value="CD630_34290"/>
</dbReference>
<dbReference type="KEGG" id="cdf:CD630_34290"/>
<dbReference type="KEGG" id="pdc:CDIF630_03737"/>
<dbReference type="PATRIC" id="fig|272563.120.peg.3623"/>
<dbReference type="eggNOG" id="COG1903">
    <property type="taxonomic scope" value="Bacteria"/>
</dbReference>
<dbReference type="OrthoDB" id="6439987at2"/>
<dbReference type="PhylomeDB" id="Q180S8"/>
<dbReference type="BioCyc" id="PDIF272563:G12WB-3606-MONOMER"/>
<dbReference type="UniPathway" id="UPA00148">
    <property type="reaction ID" value="UER00227"/>
</dbReference>
<dbReference type="Proteomes" id="UP000001978">
    <property type="component" value="Chromosome"/>
</dbReference>
<dbReference type="GO" id="GO:0043780">
    <property type="term" value="F:cobalt-precorrin-5B C1-methyltransferase activity"/>
    <property type="evidence" value="ECO:0007669"/>
    <property type="project" value="RHEA"/>
</dbReference>
<dbReference type="GO" id="GO:0019251">
    <property type="term" value="P:anaerobic cobalamin biosynthetic process"/>
    <property type="evidence" value="ECO:0007669"/>
    <property type="project" value="UniProtKB-UniRule"/>
</dbReference>
<dbReference type="GO" id="GO:0032259">
    <property type="term" value="P:methylation"/>
    <property type="evidence" value="ECO:0007669"/>
    <property type="project" value="UniProtKB-KW"/>
</dbReference>
<dbReference type="Gene3D" id="3.30.2110.10">
    <property type="entry name" value="CbiD-like"/>
    <property type="match status" value="1"/>
</dbReference>
<dbReference type="HAMAP" id="MF_00787">
    <property type="entry name" value="CbiD"/>
    <property type="match status" value="1"/>
</dbReference>
<dbReference type="InterPro" id="IPR002748">
    <property type="entry name" value="CbiD"/>
</dbReference>
<dbReference type="InterPro" id="IPR036074">
    <property type="entry name" value="CbiD_sf"/>
</dbReference>
<dbReference type="NCBIfam" id="TIGR00312">
    <property type="entry name" value="cbiD"/>
    <property type="match status" value="1"/>
</dbReference>
<dbReference type="PANTHER" id="PTHR35863">
    <property type="entry name" value="COBALT-PRECORRIN-5B C(1)-METHYLTRANSFERASE"/>
    <property type="match status" value="1"/>
</dbReference>
<dbReference type="PANTHER" id="PTHR35863:SF1">
    <property type="entry name" value="COBALT-PRECORRIN-5B C(1)-METHYLTRANSFERASE"/>
    <property type="match status" value="1"/>
</dbReference>
<dbReference type="Pfam" id="PF01888">
    <property type="entry name" value="CbiD"/>
    <property type="match status" value="1"/>
</dbReference>
<dbReference type="PIRSF" id="PIRSF026782">
    <property type="entry name" value="CbiD"/>
    <property type="match status" value="1"/>
</dbReference>
<dbReference type="SUPFAM" id="SSF111342">
    <property type="entry name" value="CbiD-like"/>
    <property type="match status" value="1"/>
</dbReference>
<sequence>MEEYVYIDGKKYRRGYTTGSCATGASKAAVYMLITKNRINTINIDTPKGIPLLLKVDNINISDTFVECSIKKDGGDDIDATHTMDIYARAEIVAKNDKNKGYLTLKDIDSLSTNSECKSELYKFIRVYGGTGIGVVTKKGLSVDVGKPAINPTPLKMINHEIRKLIGDNFESILGNDKVLKITIFAPQGETVAKKTFNPRLGIVGGISIIGTTGIVEPMSDDGWKKSLSIELQMKKEQGLDKIILVPGNHGEQFIREKLNLDIKYVVRVSNFIGYMIKEAQRIGYKKILMAGHIGKFIKVSAGIFNTHSKVADARSEILVANLALMGARYEFLNKINQCVTTEEAVELINNSEYREVYNILSNKCRERVKQYLNEDSDDIDVEVIIFSMDKSLLGKSDNTDDLVEVFI</sequence>
<accession>Q180S8</accession>
<reference key="1">
    <citation type="journal article" date="2006" name="Nat. Genet.">
        <title>The multidrug-resistant human pathogen Clostridium difficile has a highly mobile, mosaic genome.</title>
        <authorList>
            <person name="Sebaihia M."/>
            <person name="Wren B.W."/>
            <person name="Mullany P."/>
            <person name="Fairweather N.F."/>
            <person name="Minton N."/>
            <person name="Stabler R."/>
            <person name="Thomson N.R."/>
            <person name="Roberts A.P."/>
            <person name="Cerdeno-Tarraga A.M."/>
            <person name="Wang H."/>
            <person name="Holden M.T.G."/>
            <person name="Wright A."/>
            <person name="Churcher C."/>
            <person name="Quail M.A."/>
            <person name="Baker S."/>
            <person name="Bason N."/>
            <person name="Brooks K."/>
            <person name="Chillingworth T."/>
            <person name="Cronin A."/>
            <person name="Davis P."/>
            <person name="Dowd L."/>
            <person name="Fraser A."/>
            <person name="Feltwell T."/>
            <person name="Hance Z."/>
            <person name="Holroyd S."/>
            <person name="Jagels K."/>
            <person name="Moule S."/>
            <person name="Mungall K."/>
            <person name="Price C."/>
            <person name="Rabbinowitsch E."/>
            <person name="Sharp S."/>
            <person name="Simmonds M."/>
            <person name="Stevens K."/>
            <person name="Unwin L."/>
            <person name="Whithead S."/>
            <person name="Dupuy B."/>
            <person name="Dougan G."/>
            <person name="Barrell B."/>
            <person name="Parkhill J."/>
        </authorList>
    </citation>
    <scope>NUCLEOTIDE SEQUENCE [LARGE SCALE GENOMIC DNA]</scope>
    <source>
        <strain>630</strain>
    </source>
</reference>
<gene>
    <name evidence="1" type="primary">cbiD</name>
    <name type="ordered locus">CD630_34290</name>
</gene>
<protein>
    <recommendedName>
        <fullName evidence="1">Cobalt-precorrin-5B C(1)-methyltransferase</fullName>
        <ecNumber evidence="1">2.1.1.195</ecNumber>
    </recommendedName>
    <alternativeName>
        <fullName evidence="1">Cobalt-precorrin-6A synthase</fullName>
    </alternativeName>
</protein>
<evidence type="ECO:0000255" key="1">
    <source>
        <dbReference type="HAMAP-Rule" id="MF_00787"/>
    </source>
</evidence>
<feature type="chain" id="PRO_0000257756" description="Cobalt-precorrin-5B C(1)-methyltransferase">
    <location>
        <begin position="1"/>
        <end position="408"/>
    </location>
</feature>
<organism>
    <name type="scientific">Clostridioides difficile (strain 630)</name>
    <name type="common">Peptoclostridium difficile</name>
    <dbReference type="NCBI Taxonomy" id="272563"/>
    <lineage>
        <taxon>Bacteria</taxon>
        <taxon>Bacillati</taxon>
        <taxon>Bacillota</taxon>
        <taxon>Clostridia</taxon>
        <taxon>Peptostreptococcales</taxon>
        <taxon>Peptostreptococcaceae</taxon>
        <taxon>Clostridioides</taxon>
    </lineage>
</organism>
<keyword id="KW-0169">Cobalamin biosynthesis</keyword>
<keyword id="KW-0489">Methyltransferase</keyword>
<keyword id="KW-1185">Reference proteome</keyword>
<keyword id="KW-0949">S-adenosyl-L-methionine</keyword>
<keyword id="KW-0808">Transferase</keyword>
<comment type="function">
    <text evidence="1">Catalyzes the methylation of C-1 in cobalt-precorrin-5B to form cobalt-precorrin-6A.</text>
</comment>
<comment type="catalytic activity">
    <reaction evidence="1">
        <text>Co-precorrin-5B + S-adenosyl-L-methionine = Co-precorrin-6A + S-adenosyl-L-homocysteine</text>
        <dbReference type="Rhea" id="RHEA:26285"/>
        <dbReference type="ChEBI" id="CHEBI:57856"/>
        <dbReference type="ChEBI" id="CHEBI:59789"/>
        <dbReference type="ChEBI" id="CHEBI:60063"/>
        <dbReference type="ChEBI" id="CHEBI:60064"/>
        <dbReference type="EC" id="2.1.1.195"/>
    </reaction>
</comment>
<comment type="pathway">
    <text evidence="1">Cofactor biosynthesis; adenosylcobalamin biosynthesis; cob(II)yrinate a,c-diamide from sirohydrochlorin (anaerobic route): step 6/10.</text>
</comment>
<comment type="similarity">
    <text evidence="1">Belongs to the CbiD family.</text>
</comment>